<feature type="chain" id="PRO_0000074713" description="Chemotaxis protein CheA">
    <location>
        <begin position="1"/>
        <end position="652"/>
    </location>
</feature>
<feature type="domain" description="HPt" evidence="4">
    <location>
        <begin position="1"/>
        <end position="105"/>
    </location>
</feature>
<feature type="domain" description="Histidine kinase" evidence="3">
    <location>
        <begin position="255"/>
        <end position="507"/>
    </location>
</feature>
<feature type="domain" description="CheW-like" evidence="2">
    <location>
        <begin position="509"/>
        <end position="644"/>
    </location>
</feature>
<feature type="modified residue" description="Phosphohistidine" evidence="4">
    <location>
        <position position="48"/>
    </location>
</feature>
<feature type="sequence conflict" description="In Ref. 2; AAA24795." evidence="5" ref="2">
    <original>SDS</original>
    <variation>TDT</variation>
    <location>
        <begin position="440"/>
        <end position="442"/>
    </location>
</feature>
<feature type="sequence conflict" description="In Ref. 2; AAA24795." evidence="5" ref="2">
    <original>A</original>
    <variation>R</variation>
    <location>
        <position position="537"/>
    </location>
</feature>
<feature type="sequence conflict" description="In Ref. 2; AAA24795." evidence="5" ref="2">
    <original>DV</original>
    <variation>EC</variation>
    <location>
        <begin position="567"/>
        <end position="568"/>
    </location>
</feature>
<feature type="sequence conflict" description="In Ref. 2; AAA24795." evidence="5" ref="2">
    <original>Y</original>
    <variation>N</variation>
    <location>
        <position position="590"/>
    </location>
</feature>
<feature type="sequence conflict" description="In Ref. 2; AAA24795." evidence="5" ref="2">
    <original>VV</original>
    <variation>C</variation>
    <location>
        <begin position="603"/>
        <end position="604"/>
    </location>
</feature>
<feature type="sequence conflict" description="In Ref. 2; AAA24795." evidence="5" ref="2">
    <original>S</original>
    <variation>T</variation>
    <location>
        <position position="610"/>
    </location>
</feature>
<name>CHEA_KLEAK</name>
<gene>
    <name type="primary">cheA</name>
    <name type="ordered locus">EAE_15525</name>
</gene>
<proteinExistence type="inferred from homology"/>
<organism>
    <name type="scientific">Klebsiella aerogenes (strain ATCC 13048 / DSM 30053 / CCUG 1429 / JCM 1235 / KCTC 2190 / NBRC 13534 / NCIMB 10102 / NCTC 10006 / CDC 819-56)</name>
    <name type="common">Enterobacter aerogenes</name>
    <dbReference type="NCBI Taxonomy" id="1028307"/>
    <lineage>
        <taxon>Bacteria</taxon>
        <taxon>Pseudomonadati</taxon>
        <taxon>Pseudomonadota</taxon>
        <taxon>Gammaproteobacteria</taxon>
        <taxon>Enterobacterales</taxon>
        <taxon>Enterobacteriaceae</taxon>
        <taxon>Klebsiella/Raoultella group</taxon>
        <taxon>Klebsiella</taxon>
    </lineage>
</organism>
<keyword id="KW-0067">ATP-binding</keyword>
<keyword id="KW-0145">Chemotaxis</keyword>
<keyword id="KW-0963">Cytoplasm</keyword>
<keyword id="KW-0418">Kinase</keyword>
<keyword id="KW-0547">Nucleotide-binding</keyword>
<keyword id="KW-0597">Phosphoprotein</keyword>
<keyword id="KW-1185">Reference proteome</keyword>
<keyword id="KW-0808">Transferase</keyword>
<keyword id="KW-0902">Two-component regulatory system</keyword>
<accession>P21813</accession>
<accession>G0DZQ4</accession>
<protein>
    <recommendedName>
        <fullName>Chemotaxis protein CheA</fullName>
        <ecNumber>2.7.13.3</ecNumber>
    </recommendedName>
</protein>
<reference key="1">
    <citation type="journal article" date="2012" name="J. Bacteriol.">
        <title>Complete genome sequence of Enterobacter aerogenes KCTC 2190.</title>
        <authorList>
            <person name="Shin S.H."/>
            <person name="Kim S."/>
            <person name="Kim J.Y."/>
            <person name="Lee S."/>
            <person name="Um Y."/>
            <person name="Oh M.K."/>
            <person name="Kim Y.R."/>
            <person name="Lee J."/>
            <person name="Yang K.S."/>
        </authorList>
    </citation>
    <scope>NUCLEOTIDE SEQUENCE [LARGE SCALE GENOMIC DNA]</scope>
    <source>
        <strain>ATCC 13048 / DSM 30053 / CCUG 1429 / JCM 1235 / KCTC 2190 / NBRC 13534 / NCIMB 10102 / NCTC 10006 / CDC 819-56</strain>
    </source>
</reference>
<reference key="2">
    <citation type="journal article" date="1989" name="J. Bacteriol.">
        <title>Evolution of chemotactic-signal transducers in enteric bacteria.</title>
        <authorList>
            <person name="Dahl M.K."/>
            <person name="Boos W."/>
            <person name="Manson M.D."/>
        </authorList>
    </citation>
    <scope>NUCLEOTIDE SEQUENCE [GENOMIC DNA] OF 426-652</scope>
    <source>
        <strain>ATCC 13048 / DSM 30053 / CCUG 1429 / JCM 1235 / KCTC 2190 / NBRC 13534 / NCIMB 10102 / NCTC 10006 / CDC 819-56</strain>
    </source>
</reference>
<evidence type="ECO:0000250" key="1"/>
<evidence type="ECO:0000255" key="2">
    <source>
        <dbReference type="PROSITE-ProRule" id="PRU00052"/>
    </source>
</evidence>
<evidence type="ECO:0000255" key="3">
    <source>
        <dbReference type="PROSITE-ProRule" id="PRU00107"/>
    </source>
</evidence>
<evidence type="ECO:0000255" key="4">
    <source>
        <dbReference type="PROSITE-ProRule" id="PRU00110"/>
    </source>
</evidence>
<evidence type="ECO:0000305" key="5"/>
<comment type="function">
    <text evidence="1">Involved in the transmission of sensory signals from the chemoreceptors to the flagellar motors. CheA is autophosphorylated; it can transfer its phosphate group to either CheB or CheY (By similarity).</text>
</comment>
<comment type="catalytic activity">
    <reaction>
        <text>ATP + protein L-histidine = ADP + protein N-phospho-L-histidine.</text>
        <dbReference type="EC" id="2.7.13.3"/>
    </reaction>
</comment>
<comment type="subcellular location">
    <subcellularLocation>
        <location>Cytoplasm</location>
    </subcellularLocation>
</comment>
<dbReference type="EC" id="2.7.13.3"/>
<dbReference type="EMBL" id="CP002824">
    <property type="protein sequence ID" value="AEG98016.1"/>
    <property type="molecule type" value="Genomic_DNA"/>
</dbReference>
<dbReference type="EMBL" id="M26411">
    <property type="protein sequence ID" value="AAA24795.1"/>
    <property type="molecule type" value="Genomic_DNA"/>
</dbReference>
<dbReference type="PIR" id="A32302">
    <property type="entry name" value="A32302"/>
</dbReference>
<dbReference type="RefSeq" id="WP_015704929.1">
    <property type="nucleotide sequence ID" value="NC_015663.1"/>
</dbReference>
<dbReference type="RefSeq" id="YP_004593295.1">
    <property type="nucleotide sequence ID" value="NC_015663.1"/>
</dbReference>
<dbReference type="SMR" id="P21813"/>
<dbReference type="GeneID" id="93311293"/>
<dbReference type="KEGG" id="eae:EAE_15525"/>
<dbReference type="PATRIC" id="fig|1028307.3.peg.3105"/>
<dbReference type="eggNOG" id="COG0643">
    <property type="taxonomic scope" value="Bacteria"/>
</dbReference>
<dbReference type="eggNOG" id="COG2198">
    <property type="taxonomic scope" value="Bacteria"/>
</dbReference>
<dbReference type="HOGENOM" id="CLU_000650_3_6_6"/>
<dbReference type="OrthoDB" id="9803176at2"/>
<dbReference type="Proteomes" id="UP000008881">
    <property type="component" value="Chromosome"/>
</dbReference>
<dbReference type="GO" id="GO:0005737">
    <property type="term" value="C:cytoplasm"/>
    <property type="evidence" value="ECO:0007669"/>
    <property type="project" value="UniProtKB-SubCell"/>
</dbReference>
<dbReference type="GO" id="GO:0005524">
    <property type="term" value="F:ATP binding"/>
    <property type="evidence" value="ECO:0007669"/>
    <property type="project" value="UniProtKB-KW"/>
</dbReference>
<dbReference type="GO" id="GO:0000155">
    <property type="term" value="F:phosphorelay sensor kinase activity"/>
    <property type="evidence" value="ECO:0007669"/>
    <property type="project" value="InterPro"/>
</dbReference>
<dbReference type="GO" id="GO:0006935">
    <property type="term" value="P:chemotaxis"/>
    <property type="evidence" value="ECO:0007669"/>
    <property type="project" value="UniProtKB-KW"/>
</dbReference>
<dbReference type="CDD" id="cd00731">
    <property type="entry name" value="CheA_reg"/>
    <property type="match status" value="1"/>
</dbReference>
<dbReference type="CDD" id="cd16916">
    <property type="entry name" value="HATPase_CheA-like"/>
    <property type="match status" value="1"/>
</dbReference>
<dbReference type="CDD" id="cd00088">
    <property type="entry name" value="HPT"/>
    <property type="match status" value="1"/>
</dbReference>
<dbReference type="FunFam" id="2.30.30.40:FF:000048">
    <property type="entry name" value="Chemotaxis protein CheA, putative"/>
    <property type="match status" value="1"/>
</dbReference>
<dbReference type="FunFam" id="3.30.565.10:FF:000016">
    <property type="entry name" value="Chemotaxis protein CheA, putative"/>
    <property type="match status" value="1"/>
</dbReference>
<dbReference type="Gene3D" id="3.30.70.400">
    <property type="entry name" value="CheY-binding domain of CheA"/>
    <property type="match status" value="1"/>
</dbReference>
<dbReference type="Gene3D" id="1.10.287.560">
    <property type="entry name" value="Histidine kinase CheA-like, homodimeric domain"/>
    <property type="match status" value="1"/>
</dbReference>
<dbReference type="Gene3D" id="3.30.565.10">
    <property type="entry name" value="Histidine kinase-like ATPase, C-terminal domain"/>
    <property type="match status" value="1"/>
</dbReference>
<dbReference type="Gene3D" id="1.20.120.160">
    <property type="entry name" value="HPT domain"/>
    <property type="match status" value="1"/>
</dbReference>
<dbReference type="Gene3D" id="2.30.30.40">
    <property type="entry name" value="SH3 Domains"/>
    <property type="match status" value="1"/>
</dbReference>
<dbReference type="InterPro" id="IPR051315">
    <property type="entry name" value="Bact_Chemotaxis_CheA"/>
</dbReference>
<dbReference type="InterPro" id="IPR004105">
    <property type="entry name" value="CheA-like_dim"/>
</dbReference>
<dbReference type="InterPro" id="IPR037006">
    <property type="entry name" value="CheA-like_homodim_sf"/>
</dbReference>
<dbReference type="InterPro" id="IPR036061">
    <property type="entry name" value="CheW-like_dom_sf"/>
</dbReference>
<dbReference type="InterPro" id="IPR002545">
    <property type="entry name" value="CheW-lke_dom"/>
</dbReference>
<dbReference type="InterPro" id="IPR015162">
    <property type="entry name" value="CheY-binding"/>
</dbReference>
<dbReference type="InterPro" id="IPR035891">
    <property type="entry name" value="CheY-binding_CheA"/>
</dbReference>
<dbReference type="InterPro" id="IPR036890">
    <property type="entry name" value="HATPase_C_sf"/>
</dbReference>
<dbReference type="InterPro" id="IPR005467">
    <property type="entry name" value="His_kinase_dom"/>
</dbReference>
<dbReference type="InterPro" id="IPR036097">
    <property type="entry name" value="HisK_dim/P_sf"/>
</dbReference>
<dbReference type="InterPro" id="IPR036641">
    <property type="entry name" value="HPT_dom_sf"/>
</dbReference>
<dbReference type="InterPro" id="IPR004358">
    <property type="entry name" value="Sig_transdc_His_kin-like_C"/>
</dbReference>
<dbReference type="InterPro" id="IPR008207">
    <property type="entry name" value="Sig_transdc_His_kin_Hpt_dom"/>
</dbReference>
<dbReference type="NCBIfam" id="NF007835">
    <property type="entry name" value="PRK10547.1"/>
    <property type="match status" value="1"/>
</dbReference>
<dbReference type="PANTHER" id="PTHR43395:SF10">
    <property type="entry name" value="CHEMOTAXIS PROTEIN CHEA"/>
    <property type="match status" value="1"/>
</dbReference>
<dbReference type="PANTHER" id="PTHR43395">
    <property type="entry name" value="SENSOR HISTIDINE KINASE CHEA"/>
    <property type="match status" value="1"/>
</dbReference>
<dbReference type="Pfam" id="PF01584">
    <property type="entry name" value="CheW"/>
    <property type="match status" value="1"/>
</dbReference>
<dbReference type="Pfam" id="PF09078">
    <property type="entry name" value="CheY-binding"/>
    <property type="match status" value="1"/>
</dbReference>
<dbReference type="Pfam" id="PF02895">
    <property type="entry name" value="H-kinase_dim"/>
    <property type="match status" value="1"/>
</dbReference>
<dbReference type="Pfam" id="PF02518">
    <property type="entry name" value="HATPase_c"/>
    <property type="match status" value="1"/>
</dbReference>
<dbReference type="Pfam" id="PF01627">
    <property type="entry name" value="Hpt"/>
    <property type="match status" value="1"/>
</dbReference>
<dbReference type="PRINTS" id="PR00344">
    <property type="entry name" value="BCTRLSENSOR"/>
</dbReference>
<dbReference type="SMART" id="SM00260">
    <property type="entry name" value="CheW"/>
    <property type="match status" value="1"/>
</dbReference>
<dbReference type="SMART" id="SM01231">
    <property type="entry name" value="H-kinase_dim"/>
    <property type="match status" value="1"/>
</dbReference>
<dbReference type="SMART" id="SM00387">
    <property type="entry name" value="HATPase_c"/>
    <property type="match status" value="1"/>
</dbReference>
<dbReference type="SMART" id="SM00073">
    <property type="entry name" value="HPT"/>
    <property type="match status" value="1"/>
</dbReference>
<dbReference type="SUPFAM" id="SSF55874">
    <property type="entry name" value="ATPase domain of HSP90 chaperone/DNA topoisomerase II/histidine kinase"/>
    <property type="match status" value="1"/>
</dbReference>
<dbReference type="SUPFAM" id="SSF50341">
    <property type="entry name" value="CheW-like"/>
    <property type="match status" value="1"/>
</dbReference>
<dbReference type="SUPFAM" id="SSF55052">
    <property type="entry name" value="CheY-binding domain of CheA"/>
    <property type="match status" value="1"/>
</dbReference>
<dbReference type="SUPFAM" id="SSF47226">
    <property type="entry name" value="Histidine-containing phosphotransfer domain, HPT domain"/>
    <property type="match status" value="1"/>
</dbReference>
<dbReference type="SUPFAM" id="SSF47384">
    <property type="entry name" value="Homodimeric domain of signal transducing histidine kinase"/>
    <property type="match status" value="1"/>
</dbReference>
<dbReference type="PROSITE" id="PS50851">
    <property type="entry name" value="CHEW"/>
    <property type="match status" value="1"/>
</dbReference>
<dbReference type="PROSITE" id="PS50109">
    <property type="entry name" value="HIS_KIN"/>
    <property type="match status" value="1"/>
</dbReference>
<dbReference type="PROSITE" id="PS50894">
    <property type="entry name" value="HPT"/>
    <property type="match status" value="1"/>
</dbReference>
<sequence length="652" mass="70609">MSMDISAFYQTFFDEADELLADMEQHLLELDPQAPDIEPLNAIFRAAHSIKGGAATFGFSVLQETTHLLENLLDGARREEMRLSTEIINLFLETKDIMQEQLDAYKTSQQPDAESFDYICQALRQLALEAQQQDAPAAPPVVAQPAPTAVAGGMRVSLTGLKANEIPLMLEELGNLGEVHDPQQTDNSLEVTLLTTASEEDICAVLCFVLEPEQISFTTPPTTAAKPLPSAEVVPPPVAQPQPAVVEPPKAPRAKASESTSIRVAVEKVDQLINLVGELVITQSMLAQRSGNLDPVTHGDLLNSMSQLERNARDLQESVMSIRMMPMEYVFSRYPRLVRDLAGKLNKQVELTLQGSSTELDKSLIERIIDPLTHLVRNSLDHGIEDPQTRLAAGKSEVGNLILSAEHQGGNICIEVIDDGAGLNREKILAKAAAQGLAVSDSMSDEEVGMLIFAPGFSTAEQVTDVSGRGVGMDVVKRNIQEMGGHVEIHSRAGKGTSIRILLPLTLAILDGMSVKVNEEVFILPLNAVMESLQPQAEDLHPMAGGERMLQVRGEYLPLVELYRVFDVAGAKTEATQGIVVILQSAGRRYALLVDQLIGQHQVVVKNLESNYRKVPGISAATILGDGSVALIVDVSALQMLNREKLLSAAAA</sequence>